<evidence type="ECO:0000250" key="1"/>
<evidence type="ECO:0000250" key="2">
    <source>
        <dbReference type="UniProtKB" id="O35568"/>
    </source>
</evidence>
<evidence type="ECO:0000250" key="3">
    <source>
        <dbReference type="UniProtKB" id="Q12805"/>
    </source>
</evidence>
<evidence type="ECO:0000255" key="4"/>
<evidence type="ECO:0000255" key="5">
    <source>
        <dbReference type="PROSITE-ProRule" id="PRU00076"/>
    </source>
</evidence>
<evidence type="ECO:0000305" key="6"/>
<name>FBLN3_MACFA</name>
<comment type="function">
    <text evidence="3">Binds EGFR, the EGF receptor, inducing EGFR autophosphorylation and the activation of downstream signaling pathways. May play a role in cell adhesion and migration. May function as a negative regulator of chondrocyte differentiation. In the olfactory epithelium, it may regulate glial cell migration, differentiation and the ability of glial cells to support neuronal neurite outgrowth (By similarity).</text>
</comment>
<comment type="subunit">
    <text evidence="3">Interacts with ECM1. Interacts with TIMP3.</text>
</comment>
<comment type="subcellular location">
    <subcellularLocation>
        <location evidence="2">Secreted</location>
        <location evidence="2">Extracellular space</location>
        <location evidence="2">Extracellular matrix</location>
    </subcellularLocation>
    <text evidence="2">Localizes to the lamina propria underneath the olfactory epithelium.</text>
</comment>
<comment type="similarity">
    <text evidence="6">Belongs to the fibulin family.</text>
</comment>
<reference key="1">
    <citation type="submission" date="2003-06" db="EMBL/GenBank/DDBJ databases">
        <title>Molecular cloning of EFEMP1 gene from cynomolgus monkey (Macaca fascicularis).</title>
        <authorList>
            <person name="Umeda S."/>
            <person name="Suzuki M.T."/>
            <person name="Yoshikawa Y."/>
            <person name="Tanaka Y."/>
            <person name="Iwata T."/>
        </authorList>
    </citation>
    <scope>NUCLEOTIDE SEQUENCE [GENOMIC DNA / MRNA]</scope>
</reference>
<proteinExistence type="evidence at transcript level"/>
<feature type="signal peptide" evidence="4">
    <location>
        <begin position="1"/>
        <end position="17"/>
    </location>
</feature>
<feature type="chain" id="PRO_0000007571" description="EGF-containing fibulin-like extracellular matrix protein 1">
    <location>
        <begin position="18"/>
        <end position="493"/>
    </location>
</feature>
<feature type="domain" description="EGF-like 1; atypical" evidence="5">
    <location>
        <begin position="26"/>
        <end position="71"/>
    </location>
</feature>
<feature type="domain" description="EGF-like 2; calcium-binding" evidence="5">
    <location>
        <begin position="173"/>
        <end position="213"/>
    </location>
</feature>
<feature type="domain" description="EGF-like 3; calcium-binding" evidence="5">
    <location>
        <begin position="214"/>
        <end position="253"/>
    </location>
</feature>
<feature type="domain" description="EGF-like 4; calcium-binding" evidence="5">
    <location>
        <begin position="254"/>
        <end position="293"/>
    </location>
</feature>
<feature type="domain" description="EGF-like 5; calcium-binding" evidence="5">
    <location>
        <begin position="294"/>
        <end position="333"/>
    </location>
</feature>
<feature type="domain" description="EGF-like 6; calcium-binding" evidence="5">
    <location>
        <begin position="334"/>
        <end position="378"/>
    </location>
</feature>
<feature type="region of interest" description="Mediates interaction with TIMP3" evidence="1">
    <location>
        <begin position="259"/>
        <end position="493"/>
    </location>
</feature>
<feature type="glycosylation site" description="N-linked (GlcNAc...) asparagine" evidence="4">
    <location>
        <position position="249"/>
    </location>
</feature>
<feature type="disulfide bond" evidence="5">
    <location>
        <begin position="177"/>
        <end position="190"/>
    </location>
</feature>
<feature type="disulfide bond" evidence="5">
    <location>
        <begin position="184"/>
        <end position="199"/>
    </location>
</feature>
<feature type="disulfide bond" evidence="5">
    <location>
        <begin position="201"/>
        <end position="212"/>
    </location>
</feature>
<feature type="disulfide bond" evidence="5">
    <location>
        <begin position="218"/>
        <end position="228"/>
    </location>
</feature>
<feature type="disulfide bond" evidence="5">
    <location>
        <begin position="224"/>
        <end position="237"/>
    </location>
</feature>
<feature type="disulfide bond" evidence="5">
    <location>
        <begin position="239"/>
        <end position="252"/>
    </location>
</feature>
<feature type="disulfide bond" evidence="5">
    <location>
        <begin position="258"/>
        <end position="268"/>
    </location>
</feature>
<feature type="disulfide bond" evidence="5">
    <location>
        <begin position="264"/>
        <end position="277"/>
    </location>
</feature>
<feature type="disulfide bond" evidence="5">
    <location>
        <begin position="279"/>
        <end position="292"/>
    </location>
</feature>
<feature type="disulfide bond" evidence="5">
    <location>
        <begin position="298"/>
        <end position="309"/>
    </location>
</feature>
<feature type="disulfide bond" evidence="5">
    <location>
        <begin position="305"/>
        <end position="318"/>
    </location>
</feature>
<feature type="disulfide bond" evidence="5">
    <location>
        <begin position="320"/>
        <end position="332"/>
    </location>
</feature>
<feature type="disulfide bond" evidence="5">
    <location>
        <begin position="338"/>
        <end position="350"/>
    </location>
</feature>
<feature type="disulfide bond" evidence="5">
    <location>
        <begin position="344"/>
        <end position="359"/>
    </location>
</feature>
<feature type="disulfide bond" evidence="5">
    <location>
        <begin position="365"/>
        <end position="377"/>
    </location>
</feature>
<sequence length="493" mass="54547">MLKALFLTMLTLALVKSQDTEETITYTQCTDGYEWDPVRQQCKDIDECDIVPDACKGGMKCVNHYGGYLCLPKTAQIIVNNEQPQQETPPAEGTSGATTGVVAASSMATSGVLPGGGFVASAAAVAGPEVQAGRNNFVIRRNPADPQRIPSNPSHRIQCAAGYEQSEHNVCQDIDECTAGTHNCRADQVCINLRGSFACQCPPGYQKRGEQCVDIDECTIPPYCHQRCVNTPGSFYCQCSPGFQLAANNYTCVDINECDASNQCAQQCYNILGSFICQCNQGYELSSDRLNCEDIDECRTSSYLCQYQCVNEPGKFSCMCPQGYQVVRSRTCQDINECETTNECREDEMCWNYHGGFRCYPRNPCQDPYILTPENRCVCPVSNAMCRELPQSIVYKYMSIRSDRSVPSDIFQIQATTIYANTINTFRIKSGNENGEFYLRQTSPVSAMLVLVKSLSGPREHIVDLEMLTVSSIGTFRTSSVLRLTIIVGPFSF</sequence>
<protein>
    <recommendedName>
        <fullName>EGF-containing fibulin-like extracellular matrix protein 1</fullName>
    </recommendedName>
    <alternativeName>
        <fullName>Fibulin-3</fullName>
        <shortName>FIBL-3</shortName>
    </alternativeName>
</protein>
<keyword id="KW-0106">Calcium</keyword>
<keyword id="KW-1015">Disulfide bond</keyword>
<keyword id="KW-0245">EGF-like domain</keyword>
<keyword id="KW-0272">Extracellular matrix</keyword>
<keyword id="KW-0325">Glycoprotein</keyword>
<keyword id="KW-0339">Growth factor</keyword>
<keyword id="KW-1185">Reference proteome</keyword>
<keyword id="KW-0677">Repeat</keyword>
<keyword id="KW-0964">Secreted</keyword>
<keyword id="KW-0732">Signal</keyword>
<accession>Q7YQD7</accession>
<organism>
    <name type="scientific">Macaca fascicularis</name>
    <name type="common">Crab-eating macaque</name>
    <name type="synonym">Cynomolgus monkey</name>
    <dbReference type="NCBI Taxonomy" id="9541"/>
    <lineage>
        <taxon>Eukaryota</taxon>
        <taxon>Metazoa</taxon>
        <taxon>Chordata</taxon>
        <taxon>Craniata</taxon>
        <taxon>Vertebrata</taxon>
        <taxon>Euteleostomi</taxon>
        <taxon>Mammalia</taxon>
        <taxon>Eutheria</taxon>
        <taxon>Euarchontoglires</taxon>
        <taxon>Primates</taxon>
        <taxon>Haplorrhini</taxon>
        <taxon>Catarrhini</taxon>
        <taxon>Cercopithecidae</taxon>
        <taxon>Cercopithecinae</taxon>
        <taxon>Macaca</taxon>
    </lineage>
</organism>
<dbReference type="EMBL" id="AY312414">
    <property type="protein sequence ID" value="AAP82236.1"/>
    <property type="molecule type" value="Genomic_DNA"/>
</dbReference>
<dbReference type="EMBL" id="AY312408">
    <property type="protein sequence ID" value="AAP82236.1"/>
    <property type="status" value="JOINED"/>
    <property type="molecule type" value="Genomic_DNA"/>
</dbReference>
<dbReference type="EMBL" id="AY312409">
    <property type="protein sequence ID" value="AAP82236.1"/>
    <property type="status" value="JOINED"/>
    <property type="molecule type" value="Genomic_DNA"/>
</dbReference>
<dbReference type="EMBL" id="AY312410">
    <property type="protein sequence ID" value="AAP82236.1"/>
    <property type="status" value="JOINED"/>
    <property type="molecule type" value="Genomic_DNA"/>
</dbReference>
<dbReference type="EMBL" id="AY312411">
    <property type="protein sequence ID" value="AAP82236.1"/>
    <property type="status" value="JOINED"/>
    <property type="molecule type" value="Genomic_DNA"/>
</dbReference>
<dbReference type="EMBL" id="AY312412">
    <property type="protein sequence ID" value="AAP82236.1"/>
    <property type="status" value="JOINED"/>
    <property type="molecule type" value="Genomic_DNA"/>
</dbReference>
<dbReference type="EMBL" id="AY312413">
    <property type="protein sequence ID" value="AAP82236.1"/>
    <property type="status" value="JOINED"/>
    <property type="molecule type" value="Genomic_DNA"/>
</dbReference>
<dbReference type="EMBL" id="AY312415">
    <property type="protein sequence ID" value="AAP82238.1"/>
    <property type="molecule type" value="mRNA"/>
</dbReference>
<dbReference type="RefSeq" id="NP_001306340.1">
    <property type="nucleotide sequence ID" value="NM_001319411.1"/>
</dbReference>
<dbReference type="RefSeq" id="XP_015289130.1">
    <property type="nucleotide sequence ID" value="XM_015433644.1"/>
</dbReference>
<dbReference type="RefSeq" id="XP_045225219.1">
    <property type="nucleotide sequence ID" value="XM_045369284.2"/>
</dbReference>
<dbReference type="RefSeq" id="XP_045225220.1">
    <property type="nucleotide sequence ID" value="XM_045369285.2"/>
</dbReference>
<dbReference type="RefSeq" id="XP_045225221.1">
    <property type="nucleotide sequence ID" value="XM_045369286.2"/>
</dbReference>
<dbReference type="STRING" id="9541.ENSMFAP00000025476"/>
<dbReference type="GlyCosmos" id="Q7YQD7">
    <property type="glycosylation" value="1 site, No reported glycans"/>
</dbReference>
<dbReference type="GeneID" id="102119251"/>
<dbReference type="eggNOG" id="KOG1217">
    <property type="taxonomic scope" value="Eukaryota"/>
</dbReference>
<dbReference type="Proteomes" id="UP000233100">
    <property type="component" value="Unplaced"/>
</dbReference>
<dbReference type="GO" id="GO:0031012">
    <property type="term" value="C:extracellular matrix"/>
    <property type="evidence" value="ECO:0000250"/>
    <property type="project" value="UniProtKB"/>
</dbReference>
<dbReference type="GO" id="GO:0005615">
    <property type="term" value="C:extracellular space"/>
    <property type="evidence" value="ECO:0000250"/>
    <property type="project" value="UniProtKB"/>
</dbReference>
<dbReference type="GO" id="GO:0005509">
    <property type="term" value="F:calcium ion binding"/>
    <property type="evidence" value="ECO:0007669"/>
    <property type="project" value="InterPro"/>
</dbReference>
<dbReference type="GO" id="GO:0005006">
    <property type="term" value="F:epidermal growth factor receptor activity"/>
    <property type="evidence" value="ECO:0000250"/>
    <property type="project" value="UniProtKB"/>
</dbReference>
<dbReference type="GO" id="GO:0005154">
    <property type="term" value="F:epidermal growth factor receptor binding"/>
    <property type="evidence" value="ECO:0000250"/>
    <property type="project" value="UniProtKB"/>
</dbReference>
<dbReference type="GO" id="GO:0008083">
    <property type="term" value="F:growth factor activity"/>
    <property type="evidence" value="ECO:0007669"/>
    <property type="project" value="UniProtKB-KW"/>
</dbReference>
<dbReference type="GO" id="GO:0007173">
    <property type="term" value="P:epidermal growth factor receptor signaling pathway"/>
    <property type="evidence" value="ECO:0000250"/>
    <property type="project" value="UniProtKB"/>
</dbReference>
<dbReference type="GO" id="GO:0032331">
    <property type="term" value="P:negative regulation of chondrocyte differentiation"/>
    <property type="evidence" value="ECO:0000250"/>
    <property type="project" value="UniProtKB"/>
</dbReference>
<dbReference type="GO" id="GO:0018108">
    <property type="term" value="P:peptidyl-tyrosine phosphorylation"/>
    <property type="evidence" value="ECO:0000250"/>
    <property type="project" value="UniProtKB"/>
</dbReference>
<dbReference type="GO" id="GO:0006355">
    <property type="term" value="P:regulation of DNA-templated transcription"/>
    <property type="evidence" value="ECO:0000250"/>
    <property type="project" value="UniProtKB"/>
</dbReference>
<dbReference type="CDD" id="cd00054">
    <property type="entry name" value="EGF_CA"/>
    <property type="match status" value="4"/>
</dbReference>
<dbReference type="FunFam" id="2.10.25.10:FF:000323">
    <property type="entry name" value="EGF-containing fibulin-like extracellular matrix protein 1"/>
    <property type="match status" value="1"/>
</dbReference>
<dbReference type="FunFam" id="2.10.25.10:FF:000380">
    <property type="entry name" value="EGF-containing fibulin-like extracellular matrix protein 1"/>
    <property type="match status" value="1"/>
</dbReference>
<dbReference type="FunFam" id="2.10.25.10:FF:000418">
    <property type="entry name" value="EGF-containing fibulin-like extracellular matrix protein 1"/>
    <property type="match status" value="1"/>
</dbReference>
<dbReference type="FunFam" id="2.10.25.10:FF:000201">
    <property type="entry name" value="EGF-containing fibulin-like extracellular matrix protein 2"/>
    <property type="match status" value="1"/>
</dbReference>
<dbReference type="Gene3D" id="2.10.25.10">
    <property type="entry name" value="Laminin"/>
    <property type="match status" value="5"/>
</dbReference>
<dbReference type="InterPro" id="IPR026823">
    <property type="entry name" value="cEGF"/>
</dbReference>
<dbReference type="InterPro" id="IPR001881">
    <property type="entry name" value="EGF-like_Ca-bd_dom"/>
</dbReference>
<dbReference type="InterPro" id="IPR000742">
    <property type="entry name" value="EGF-like_dom"/>
</dbReference>
<dbReference type="InterPro" id="IPR000152">
    <property type="entry name" value="EGF-type_Asp/Asn_hydroxyl_site"/>
</dbReference>
<dbReference type="InterPro" id="IPR018097">
    <property type="entry name" value="EGF_Ca-bd_CS"/>
</dbReference>
<dbReference type="InterPro" id="IPR055088">
    <property type="entry name" value="Fibulin_C"/>
</dbReference>
<dbReference type="InterPro" id="IPR009030">
    <property type="entry name" value="Growth_fac_rcpt_cys_sf"/>
</dbReference>
<dbReference type="InterPro" id="IPR052235">
    <property type="entry name" value="Nephronectin_domain"/>
</dbReference>
<dbReference type="InterPro" id="IPR049883">
    <property type="entry name" value="NOTCH1_EGF-like"/>
</dbReference>
<dbReference type="PANTHER" id="PTHR24050:SF27">
    <property type="entry name" value="FIBRILLIN-1"/>
    <property type="match status" value="1"/>
</dbReference>
<dbReference type="PANTHER" id="PTHR24050">
    <property type="entry name" value="PA14 DOMAIN-CONTAINING PROTEIN"/>
    <property type="match status" value="1"/>
</dbReference>
<dbReference type="Pfam" id="PF12662">
    <property type="entry name" value="cEGF"/>
    <property type="match status" value="3"/>
</dbReference>
<dbReference type="Pfam" id="PF07645">
    <property type="entry name" value="EGF_CA"/>
    <property type="match status" value="2"/>
</dbReference>
<dbReference type="Pfam" id="PF22914">
    <property type="entry name" value="Fibulin_C"/>
    <property type="match status" value="1"/>
</dbReference>
<dbReference type="SMART" id="SM00181">
    <property type="entry name" value="EGF"/>
    <property type="match status" value="5"/>
</dbReference>
<dbReference type="SMART" id="SM00179">
    <property type="entry name" value="EGF_CA"/>
    <property type="match status" value="6"/>
</dbReference>
<dbReference type="SUPFAM" id="SSF57184">
    <property type="entry name" value="Growth factor receptor domain"/>
    <property type="match status" value="2"/>
</dbReference>
<dbReference type="PROSITE" id="PS00010">
    <property type="entry name" value="ASX_HYDROXYL"/>
    <property type="match status" value="4"/>
</dbReference>
<dbReference type="PROSITE" id="PS01186">
    <property type="entry name" value="EGF_2"/>
    <property type="match status" value="4"/>
</dbReference>
<dbReference type="PROSITE" id="PS50026">
    <property type="entry name" value="EGF_3"/>
    <property type="match status" value="4"/>
</dbReference>
<dbReference type="PROSITE" id="PS01187">
    <property type="entry name" value="EGF_CA"/>
    <property type="match status" value="6"/>
</dbReference>
<gene>
    <name type="primary">EFEMP1</name>
    <name type="synonym">FBLN3</name>
</gene>